<dbReference type="EC" id="6.3.2.9" evidence="1"/>
<dbReference type="EMBL" id="CP000419">
    <property type="protein sequence ID" value="ABJ66024.1"/>
    <property type="molecule type" value="Genomic_DNA"/>
</dbReference>
<dbReference type="RefSeq" id="WP_011681001.1">
    <property type="nucleotide sequence ID" value="NC_008532.1"/>
</dbReference>
<dbReference type="SMR" id="Q03L98"/>
<dbReference type="KEGG" id="ste:STER_0773"/>
<dbReference type="HOGENOM" id="CLU_032540_0_1_9"/>
<dbReference type="UniPathway" id="UPA00219"/>
<dbReference type="GO" id="GO:0005737">
    <property type="term" value="C:cytoplasm"/>
    <property type="evidence" value="ECO:0007669"/>
    <property type="project" value="UniProtKB-SubCell"/>
</dbReference>
<dbReference type="GO" id="GO:0005524">
    <property type="term" value="F:ATP binding"/>
    <property type="evidence" value="ECO:0007669"/>
    <property type="project" value="UniProtKB-UniRule"/>
</dbReference>
<dbReference type="GO" id="GO:0008764">
    <property type="term" value="F:UDP-N-acetylmuramoylalanine-D-glutamate ligase activity"/>
    <property type="evidence" value="ECO:0007669"/>
    <property type="project" value="UniProtKB-UniRule"/>
</dbReference>
<dbReference type="GO" id="GO:0051301">
    <property type="term" value="P:cell division"/>
    <property type="evidence" value="ECO:0007669"/>
    <property type="project" value="UniProtKB-KW"/>
</dbReference>
<dbReference type="GO" id="GO:0071555">
    <property type="term" value="P:cell wall organization"/>
    <property type="evidence" value="ECO:0007669"/>
    <property type="project" value="UniProtKB-KW"/>
</dbReference>
<dbReference type="GO" id="GO:0009252">
    <property type="term" value="P:peptidoglycan biosynthetic process"/>
    <property type="evidence" value="ECO:0007669"/>
    <property type="project" value="UniProtKB-UniRule"/>
</dbReference>
<dbReference type="GO" id="GO:0008360">
    <property type="term" value="P:regulation of cell shape"/>
    <property type="evidence" value="ECO:0007669"/>
    <property type="project" value="UniProtKB-KW"/>
</dbReference>
<dbReference type="Gene3D" id="3.90.190.20">
    <property type="entry name" value="Mur ligase, C-terminal domain"/>
    <property type="match status" value="1"/>
</dbReference>
<dbReference type="Gene3D" id="3.40.1190.10">
    <property type="entry name" value="Mur-like, catalytic domain"/>
    <property type="match status" value="1"/>
</dbReference>
<dbReference type="Gene3D" id="3.40.50.720">
    <property type="entry name" value="NAD(P)-binding Rossmann-like Domain"/>
    <property type="match status" value="1"/>
</dbReference>
<dbReference type="HAMAP" id="MF_00639">
    <property type="entry name" value="MurD"/>
    <property type="match status" value="1"/>
</dbReference>
<dbReference type="InterPro" id="IPR036565">
    <property type="entry name" value="Mur-like_cat_sf"/>
</dbReference>
<dbReference type="InterPro" id="IPR004101">
    <property type="entry name" value="Mur_ligase_C"/>
</dbReference>
<dbReference type="InterPro" id="IPR036615">
    <property type="entry name" value="Mur_ligase_C_dom_sf"/>
</dbReference>
<dbReference type="InterPro" id="IPR013221">
    <property type="entry name" value="Mur_ligase_cen"/>
</dbReference>
<dbReference type="InterPro" id="IPR005762">
    <property type="entry name" value="MurD"/>
</dbReference>
<dbReference type="NCBIfam" id="TIGR01087">
    <property type="entry name" value="murD"/>
    <property type="match status" value="1"/>
</dbReference>
<dbReference type="PANTHER" id="PTHR43692">
    <property type="entry name" value="UDP-N-ACETYLMURAMOYLALANINE--D-GLUTAMATE LIGASE"/>
    <property type="match status" value="1"/>
</dbReference>
<dbReference type="PANTHER" id="PTHR43692:SF1">
    <property type="entry name" value="UDP-N-ACETYLMURAMOYLALANINE--D-GLUTAMATE LIGASE"/>
    <property type="match status" value="1"/>
</dbReference>
<dbReference type="Pfam" id="PF02875">
    <property type="entry name" value="Mur_ligase_C"/>
    <property type="match status" value="1"/>
</dbReference>
<dbReference type="Pfam" id="PF08245">
    <property type="entry name" value="Mur_ligase_M"/>
    <property type="match status" value="1"/>
</dbReference>
<dbReference type="Pfam" id="PF21799">
    <property type="entry name" value="MurD-like_N"/>
    <property type="match status" value="1"/>
</dbReference>
<dbReference type="SUPFAM" id="SSF51984">
    <property type="entry name" value="MurCD N-terminal domain"/>
    <property type="match status" value="1"/>
</dbReference>
<dbReference type="SUPFAM" id="SSF53623">
    <property type="entry name" value="MurD-like peptide ligases, catalytic domain"/>
    <property type="match status" value="1"/>
</dbReference>
<dbReference type="SUPFAM" id="SSF53244">
    <property type="entry name" value="MurD-like peptide ligases, peptide-binding domain"/>
    <property type="match status" value="1"/>
</dbReference>
<reference key="1">
    <citation type="journal article" date="2006" name="Proc. Natl. Acad. Sci. U.S.A.">
        <title>Comparative genomics of the lactic acid bacteria.</title>
        <authorList>
            <person name="Makarova K.S."/>
            <person name="Slesarev A."/>
            <person name="Wolf Y.I."/>
            <person name="Sorokin A."/>
            <person name="Mirkin B."/>
            <person name="Koonin E.V."/>
            <person name="Pavlov A."/>
            <person name="Pavlova N."/>
            <person name="Karamychev V."/>
            <person name="Polouchine N."/>
            <person name="Shakhova V."/>
            <person name="Grigoriev I."/>
            <person name="Lou Y."/>
            <person name="Rohksar D."/>
            <person name="Lucas S."/>
            <person name="Huang K."/>
            <person name="Goodstein D.M."/>
            <person name="Hawkins T."/>
            <person name="Plengvidhya V."/>
            <person name="Welker D."/>
            <person name="Hughes J."/>
            <person name="Goh Y."/>
            <person name="Benson A."/>
            <person name="Baldwin K."/>
            <person name="Lee J.-H."/>
            <person name="Diaz-Muniz I."/>
            <person name="Dosti B."/>
            <person name="Smeianov V."/>
            <person name="Wechter W."/>
            <person name="Barabote R."/>
            <person name="Lorca G."/>
            <person name="Altermann E."/>
            <person name="Barrangou R."/>
            <person name="Ganesan B."/>
            <person name="Xie Y."/>
            <person name="Rawsthorne H."/>
            <person name="Tamir D."/>
            <person name="Parker C."/>
            <person name="Breidt F."/>
            <person name="Broadbent J.R."/>
            <person name="Hutkins R."/>
            <person name="O'Sullivan D."/>
            <person name="Steele J."/>
            <person name="Unlu G."/>
            <person name="Saier M.H. Jr."/>
            <person name="Klaenhammer T."/>
            <person name="Richardson P."/>
            <person name="Kozyavkin S."/>
            <person name="Weimer B.C."/>
            <person name="Mills D.A."/>
        </authorList>
    </citation>
    <scope>NUCLEOTIDE SEQUENCE [LARGE SCALE GENOMIC DNA]</scope>
    <source>
        <strain>ATCC BAA-491 / LMD-9</strain>
    </source>
</reference>
<comment type="function">
    <text evidence="1">Cell wall formation. Catalyzes the addition of glutamate to the nucleotide precursor UDP-N-acetylmuramoyl-L-alanine (UMA).</text>
</comment>
<comment type="catalytic activity">
    <reaction evidence="1">
        <text>UDP-N-acetyl-alpha-D-muramoyl-L-alanine + D-glutamate + ATP = UDP-N-acetyl-alpha-D-muramoyl-L-alanyl-D-glutamate + ADP + phosphate + H(+)</text>
        <dbReference type="Rhea" id="RHEA:16429"/>
        <dbReference type="ChEBI" id="CHEBI:15378"/>
        <dbReference type="ChEBI" id="CHEBI:29986"/>
        <dbReference type="ChEBI" id="CHEBI:30616"/>
        <dbReference type="ChEBI" id="CHEBI:43474"/>
        <dbReference type="ChEBI" id="CHEBI:83898"/>
        <dbReference type="ChEBI" id="CHEBI:83900"/>
        <dbReference type="ChEBI" id="CHEBI:456216"/>
        <dbReference type="EC" id="6.3.2.9"/>
    </reaction>
</comment>
<comment type="pathway">
    <text evidence="1">Cell wall biogenesis; peptidoglycan biosynthesis.</text>
</comment>
<comment type="subcellular location">
    <subcellularLocation>
        <location evidence="1">Cytoplasm</location>
    </subcellularLocation>
</comment>
<comment type="similarity">
    <text evidence="1">Belongs to the MurCDEF family.</text>
</comment>
<name>MURD_STRTD</name>
<evidence type="ECO:0000255" key="1">
    <source>
        <dbReference type="HAMAP-Rule" id="MF_00639"/>
    </source>
</evidence>
<sequence length="450" mass="48608">MKSITQLENKKVLVLGLAKSGEAAARLLAKLGAIVTVNDGKAFEENPSAQSLLEEGIKVVCGGHPLELLDENFELMVKNPGIRYDNPMVARALEKEIPVWTEVELAYLVSEAPIIGITGSNGKTTTTTMIADVLNHGGKSGVLSGNIGFPASEVAQSVTNQDTLVMELSSFQLMGIESFHPHIAVITNLMPTHIDYHGSFEEYVAAKWNIQNEMTSDDFIILNFNQDLAKELATQTNAQVVPFSTVEKVDGAYLENGGLYFKGELLMHADELGVPGSHNVENALATIAVAKLSGVSNQAIKETLSSFGGVKHRLQFVDTIDDVKFYNDSKSTNILATQKALSGFDNSKVILIAGGLDRGNEFDELIPDITGLKKMVILGESAPRVKRAADKTGVTYLDAKDVADATRIAFEQASAGDVVLLSPANASWDMYKNFEVRGDEFITTVERLKG</sequence>
<gene>
    <name evidence="1" type="primary">murD</name>
    <name type="ordered locus">STER_0773</name>
</gene>
<protein>
    <recommendedName>
        <fullName evidence="1">UDP-N-acetylmuramoylalanine--D-glutamate ligase</fullName>
        <ecNumber evidence="1">6.3.2.9</ecNumber>
    </recommendedName>
    <alternativeName>
        <fullName evidence="1">D-glutamic acid-adding enzyme</fullName>
    </alternativeName>
    <alternativeName>
        <fullName evidence="1">UDP-N-acetylmuramoyl-L-alanyl-D-glutamate synthetase</fullName>
    </alternativeName>
</protein>
<keyword id="KW-0067">ATP-binding</keyword>
<keyword id="KW-0131">Cell cycle</keyword>
<keyword id="KW-0132">Cell division</keyword>
<keyword id="KW-0133">Cell shape</keyword>
<keyword id="KW-0961">Cell wall biogenesis/degradation</keyword>
<keyword id="KW-0963">Cytoplasm</keyword>
<keyword id="KW-0436">Ligase</keyword>
<keyword id="KW-0547">Nucleotide-binding</keyword>
<keyword id="KW-0573">Peptidoglycan synthesis</keyword>
<feature type="chain" id="PRO_0000301455" description="UDP-N-acetylmuramoylalanine--D-glutamate ligase">
    <location>
        <begin position="1"/>
        <end position="450"/>
    </location>
</feature>
<feature type="binding site" evidence="1">
    <location>
        <begin position="119"/>
        <end position="125"/>
    </location>
    <ligand>
        <name>ATP</name>
        <dbReference type="ChEBI" id="CHEBI:30616"/>
    </ligand>
</feature>
<proteinExistence type="inferred from homology"/>
<organism>
    <name type="scientific">Streptococcus thermophilus (strain ATCC BAA-491 / LMD-9)</name>
    <dbReference type="NCBI Taxonomy" id="322159"/>
    <lineage>
        <taxon>Bacteria</taxon>
        <taxon>Bacillati</taxon>
        <taxon>Bacillota</taxon>
        <taxon>Bacilli</taxon>
        <taxon>Lactobacillales</taxon>
        <taxon>Streptococcaceae</taxon>
        <taxon>Streptococcus</taxon>
    </lineage>
</organism>
<accession>Q03L98</accession>